<protein>
    <recommendedName>
        <fullName evidence="4">Sporozoite-associated protein</fullName>
        <shortName evidence="4">AgSAP</shortName>
    </recommendedName>
</protein>
<evidence type="ECO:0000255" key="1">
    <source>
        <dbReference type="PROSITE-ProRule" id="PRU00498"/>
    </source>
</evidence>
<evidence type="ECO:0000256" key="2">
    <source>
        <dbReference type="SAM" id="MobiDB-lite"/>
    </source>
</evidence>
<evidence type="ECO:0000269" key="3">
    <source>
    </source>
</evidence>
<evidence type="ECO:0000303" key="4">
    <source>
    </source>
</evidence>
<evidence type="ECO:0000305" key="5"/>
<evidence type="ECO:0000312" key="6">
    <source>
        <dbReference type="Proteomes" id="UP000007062"/>
    </source>
</evidence>
<accession>A0A1S4GMU2</accession>
<feature type="chain" id="PRO_0000460384" description="Sporozoite-associated protein">
    <location>
        <begin position="1"/>
        <end position="539"/>
    </location>
</feature>
<feature type="region of interest" description="Disordered" evidence="2">
    <location>
        <begin position="126"/>
        <end position="153"/>
    </location>
</feature>
<feature type="region of interest" description="Disordered" evidence="2">
    <location>
        <begin position="192"/>
        <end position="231"/>
    </location>
</feature>
<feature type="region of interest" description="Disordered" evidence="2">
    <location>
        <begin position="303"/>
        <end position="355"/>
    </location>
</feature>
<feature type="compositionally biased region" description="Low complexity" evidence="2">
    <location>
        <begin position="192"/>
        <end position="215"/>
    </location>
</feature>
<feature type="compositionally biased region" description="Polar residues" evidence="2">
    <location>
        <begin position="216"/>
        <end position="228"/>
    </location>
</feature>
<feature type="compositionally biased region" description="Polar residues" evidence="2">
    <location>
        <begin position="320"/>
        <end position="332"/>
    </location>
</feature>
<feature type="glycosylation site" description="N-linked (GlcNAc...) asparagine" evidence="1">
    <location>
        <position position="31"/>
    </location>
</feature>
<feature type="glycosylation site" description="N-linked (GlcNAc...) asparagine" evidence="1">
    <location>
        <position position="90"/>
    </location>
</feature>
<feature type="glycosylation site" description="N-linked (GlcNAc...) asparagine" evidence="1">
    <location>
        <position position="102"/>
    </location>
</feature>
<feature type="glycosylation site" description="N-linked (GlcNAc...) asparagine" evidence="1">
    <location>
        <position position="149"/>
    </location>
</feature>
<feature type="glycosylation site" description="N-linked (GlcNAc...) asparagine" evidence="1">
    <location>
        <position position="167"/>
    </location>
</feature>
<feature type="glycosylation site" description="N-linked (GlcNAc...) asparagine" evidence="1">
    <location>
        <position position="217"/>
    </location>
</feature>
<feature type="glycosylation site" description="N-linked (GlcNAc...) asparagine" evidence="1">
    <location>
        <position position="271"/>
    </location>
</feature>
<feature type="glycosylation site" description="N-linked (GlcNAc...) asparagine" evidence="1">
    <location>
        <position position="288"/>
    </location>
</feature>
<feature type="glycosylation site" description="N-linked (GlcNAc...) asparagine" evidence="1">
    <location>
        <position position="427"/>
    </location>
</feature>
<feature type="glycosylation site" description="N-linked (GlcNAc...) asparagine" evidence="1">
    <location>
        <position position="503"/>
    </location>
</feature>
<sequence length="539" mass="60054">MVNLCNLLLKYDHFSKVEDDIFIYIDRVLENASEIYVRQQKAKRELECLEDQLAEKQKQSNRCVLPVPRSPVKRRKVQSLDSPLSAQKENVSILEDSTIFPNKSDSDVSAKLELNILDSEEPFFALTQSPPPAAAPQSPSPRAILSPRNVSKTSPLRPMQLLFPEENKSEKKPLLRESRFGKSVKLLESSSVVAEKSNTPTTPKTTPNGKWTGKNANATIETSNTDHTPPSGLKRFLSLADSNQRFRQVKLNFPRQTKQSPMNEPEHNSVNDTLFSDFVVPTPPSVANKSKFLKSLRMKKQSTLISRAQDDKPGTKGGSDETSSSTAASNERQPMFPNDNDDDDIDQTYCPGVESTSKLSKGLSFKIKQEPESQQKERIPLKVPSNKKLECLSDHILGVGEDSESNEIIVLPAPSQQSVISVAESQNATEIFISELNGENAKRMDAVTIETNPSNVPRVNRELGELSGSVKPYTRGYEQPSPQGLCIDCTMLYQYHTTRGVSNDTARSKLPRNCRNCRVAQLHSTPPGFWDPDFLPTPE</sequence>
<comment type="function">
    <text evidence="3">Binds heparan sulfate proteoglycans present on the mammalian cell surface (PubMed:34903042). Modulates host immune responses at the site of inoculation via decreasing the expression of TNF-alpha/TNF, IL-1beta/IL1B, IFN-gamma/IFNG, IL4, MMP9, TGF-beta and ICAM1 (PubMed:34903042).</text>
</comment>
<comment type="function">
    <text evidence="3">(Microbial infection) Interacts with the surface of Plasmodium berghei sporozoites (PubMed:34903042). Promotes Plasmodium berghei transmission to the mouse host (PubMed:34903042). Does not affect Plasmodium berghei sporozoite viability (PubMed:34903042).</text>
</comment>
<comment type="function">
    <text evidence="3">(Microbial infection) Interacts with the surface of Plasmodium falciparum sporozoites.</text>
</comment>
<comment type="subcellular location">
    <subcellularLocation>
        <location evidence="3">Secreted</location>
    </subcellularLocation>
</comment>
<comment type="tissue specificity">
    <text evidence="3">Saliva (at protein level) (PubMed:34903042). Female salivary gland (PubMed:34903042). Female midgut (PubMed:34903042).</text>
</comment>
<comment type="induction">
    <text evidence="3">(Microbial infection) Induced in salivary gland by Plasmodium berghei infection.</text>
</comment>
<comment type="disruption phenotype">
    <text evidence="3">RNAi-mediated knockdown has no significant effects on mosquito feeding.</text>
</comment>
<comment type="disruption phenotype">
    <text evidence="3">(Microbial infection) RNAi-mediated knockdown causes a reduction in the Plasmodium berghei burden in the mouse liver 42 hours after mosquito bites.</text>
</comment>
<comment type="miscellaneous">
    <text evidence="3">Laboratory mice bitten by Anopheles gambiae mosquitoes develop IgG antibodies against AgSAP (PubMed:34903042). Sera from individuals living in an area where malaria is endemic (Senegal) have higher IgG reactivity to AgSAP than sera from individuals living in an area where malaria is absent (Marseille, France) (PubMed:34903042). Mice immunized with AgSAP and exposed to infectious mosquito bites exhibit a significantly lower Plasmodium berghei burden in the liver (PubMed:34903042).</text>
</comment>
<dbReference type="EMBL" id="AAAB01008968">
    <property type="status" value="NOT_ANNOTATED_CDS"/>
    <property type="molecule type" value="Genomic_DNA"/>
</dbReference>
<dbReference type="SMR" id="A0A1S4GMU2"/>
<dbReference type="EnsemblMetazoa" id="AGAP004803-RA">
    <property type="protein sequence ID" value="AGAP004803-PA"/>
    <property type="gene ID" value="AGAP004803"/>
</dbReference>
<dbReference type="VEuPathDB" id="VectorBase:AGAMI1_010832"/>
<dbReference type="VEuPathDB" id="VectorBase:AGAP004803"/>
<dbReference type="InParanoid" id="A0A1S4GMU2"/>
<dbReference type="OMA" id="FDIDQTY"/>
<dbReference type="Proteomes" id="UP000007062">
    <property type="component" value="Chromosome 2L"/>
</dbReference>
<dbReference type="GO" id="GO:0005576">
    <property type="term" value="C:extracellular region"/>
    <property type="evidence" value="ECO:0007669"/>
    <property type="project" value="UniProtKB-SubCell"/>
</dbReference>
<dbReference type="GO" id="GO:0002376">
    <property type="term" value="P:immune system process"/>
    <property type="evidence" value="ECO:0007669"/>
    <property type="project" value="UniProtKB-KW"/>
</dbReference>
<keyword id="KW-0325">Glycoprotein</keyword>
<keyword id="KW-0391">Immunity</keyword>
<keyword id="KW-0395">Inflammatory response</keyword>
<keyword id="KW-1185">Reference proteome</keyword>
<keyword id="KW-0964">Secreted</keyword>
<reference evidence="6" key="1">
    <citation type="journal article" date="2002" name="Science">
        <title>The genome sequence of the malaria mosquito Anopheles gambiae.</title>
        <authorList>
            <person name="Holt R.A."/>
            <person name="Subramanian G.M."/>
            <person name="Halpern A."/>
            <person name="Sutton G.G."/>
            <person name="Charlab R."/>
            <person name="Nusskern D.R."/>
            <person name="Wincker P."/>
            <person name="Clark A.G."/>
            <person name="Ribeiro J.M.C."/>
            <person name="Wides R."/>
            <person name="Salzberg S.L."/>
            <person name="Loftus B.J."/>
            <person name="Yandell M.D."/>
            <person name="Majoros W.H."/>
            <person name="Rusch D.B."/>
            <person name="Lai Z."/>
            <person name="Kraft C.L."/>
            <person name="Abril J.F."/>
            <person name="Anthouard V."/>
            <person name="Arensburger P."/>
            <person name="Atkinson P.W."/>
            <person name="Baden H."/>
            <person name="de Berardinis V."/>
            <person name="Baldwin D."/>
            <person name="Benes V."/>
            <person name="Biedler J."/>
            <person name="Blass C."/>
            <person name="Bolanos R."/>
            <person name="Boscus D."/>
            <person name="Barnstead M."/>
            <person name="Cai S."/>
            <person name="Center A."/>
            <person name="Chaturverdi K."/>
            <person name="Christophides G.K."/>
            <person name="Chrystal M.A.M."/>
            <person name="Clamp M."/>
            <person name="Cravchik A."/>
            <person name="Curwen V."/>
            <person name="Dana A."/>
            <person name="Delcher A."/>
            <person name="Dew I."/>
            <person name="Evans C.A."/>
            <person name="Flanigan M."/>
            <person name="Grundschober-Freimoser A."/>
            <person name="Friedli L."/>
            <person name="Gu Z."/>
            <person name="Guan P."/>
            <person name="Guigo R."/>
            <person name="Hillenmeyer M.E."/>
            <person name="Hladun S.L."/>
            <person name="Hogan J.R."/>
            <person name="Hong Y.S."/>
            <person name="Hoover J."/>
            <person name="Jaillon O."/>
            <person name="Ke Z."/>
            <person name="Kodira C.D."/>
            <person name="Kokoza E."/>
            <person name="Koutsos A."/>
            <person name="Letunic I."/>
            <person name="Levitsky A.A."/>
            <person name="Liang Y."/>
            <person name="Lin J.-J."/>
            <person name="Lobo N.F."/>
            <person name="Lopez J.R."/>
            <person name="Malek J.A."/>
            <person name="McIntosh T.C."/>
            <person name="Meister S."/>
            <person name="Miller J.R."/>
            <person name="Mobarry C."/>
            <person name="Mongin E."/>
            <person name="Murphy S.D."/>
            <person name="O'Brochta D.A."/>
            <person name="Pfannkoch C."/>
            <person name="Qi R."/>
            <person name="Regier M.A."/>
            <person name="Remington K."/>
            <person name="Shao H."/>
            <person name="Sharakhova M.V."/>
            <person name="Sitter C.D."/>
            <person name="Shetty J."/>
            <person name="Smith T.J."/>
            <person name="Strong R."/>
            <person name="Sun J."/>
            <person name="Thomasova D."/>
            <person name="Ton L.Q."/>
            <person name="Topalis P."/>
            <person name="Tu Z.J."/>
            <person name="Unger M.F."/>
            <person name="Walenz B."/>
            <person name="Wang A.H."/>
            <person name="Wang J."/>
            <person name="Wang M."/>
            <person name="Wang X."/>
            <person name="Woodford K.J."/>
            <person name="Wortman J.R."/>
            <person name="Wu M."/>
            <person name="Yao A."/>
            <person name="Zdobnov E.M."/>
            <person name="Zhang H."/>
            <person name="Zhao Q."/>
            <person name="Zhao S."/>
            <person name="Zhu S.C."/>
            <person name="Zhimulev I."/>
            <person name="Coluzzi M."/>
            <person name="della Torre A."/>
            <person name="Roth C.W."/>
            <person name="Louis C."/>
            <person name="Kalush F."/>
            <person name="Mural R.J."/>
            <person name="Myers E.W."/>
            <person name="Adams M.D."/>
            <person name="Smith H.O."/>
            <person name="Broder S."/>
            <person name="Gardner M.J."/>
            <person name="Fraser C.M."/>
            <person name="Birney E."/>
            <person name="Bork P."/>
            <person name="Brey P.T."/>
            <person name="Venter J.C."/>
            <person name="Weissenbach J."/>
            <person name="Kafatos F.C."/>
            <person name="Collins F.H."/>
            <person name="Hoffman S.L."/>
        </authorList>
    </citation>
    <scope>NUCLEOTIDE SEQUENCE [LARGE SCALE GENOMIC DNA]</scope>
    <source>
        <strain evidence="6">PEST</strain>
    </source>
</reference>
<reference evidence="5" key="2">
    <citation type="journal article" date="2021" name="MBio">
        <title>Immunomodulation by Mosquito Salivary Protein AgSAP Contributes to Early Host Infection by Plasmodium.</title>
        <authorList>
            <person name="Arora G."/>
            <person name="Sajid A."/>
            <person name="Chuang Y.M."/>
            <person name="Dong Y."/>
            <person name="Gupta A."/>
            <person name="Gambardella K."/>
            <person name="DePonte K."/>
            <person name="Almeras L."/>
            <person name="Dimopolous G."/>
            <person name="Fikrig E."/>
        </authorList>
    </citation>
    <scope>FUNCTION</scope>
    <scope>FUNCTION (MICROBIAL INFECTION)</scope>
    <scope>SUBCELLULAR LOCATION</scope>
    <scope>TISSUE SPECIFICITY</scope>
    <scope>INDUCTION (MICROBIAL INFECTION)</scope>
    <scope>DISRUPTION PHENOTYPE</scope>
    <scope>DISRUPTION PHENOTYPE (MICROBIAL INFECTION)</scope>
</reference>
<proteinExistence type="evidence at protein level"/>
<organism evidence="6">
    <name type="scientific">Anopheles gambiae</name>
    <name type="common">African malaria mosquito</name>
    <dbReference type="NCBI Taxonomy" id="7165"/>
    <lineage>
        <taxon>Eukaryota</taxon>
        <taxon>Metazoa</taxon>
        <taxon>Ecdysozoa</taxon>
        <taxon>Arthropoda</taxon>
        <taxon>Hexapoda</taxon>
        <taxon>Insecta</taxon>
        <taxon>Pterygota</taxon>
        <taxon>Neoptera</taxon>
        <taxon>Endopterygota</taxon>
        <taxon>Diptera</taxon>
        <taxon>Nematocera</taxon>
        <taxon>Culicoidea</taxon>
        <taxon>Culicidae</taxon>
        <taxon>Anophelinae</taxon>
        <taxon>Anopheles</taxon>
    </lineage>
</organism>
<name>SAP_ANOGA</name>